<name>TRUB_DEIGD</name>
<reference key="1">
    <citation type="submission" date="2006-04" db="EMBL/GenBank/DDBJ databases">
        <title>Complete sequence of chromosome of Deinococcus geothermalis DSM 11300.</title>
        <authorList>
            <person name="Copeland A."/>
            <person name="Lucas S."/>
            <person name="Lapidus A."/>
            <person name="Barry K."/>
            <person name="Detter J.C."/>
            <person name="Glavina del Rio T."/>
            <person name="Hammon N."/>
            <person name="Israni S."/>
            <person name="Dalin E."/>
            <person name="Tice H."/>
            <person name="Pitluck S."/>
            <person name="Brettin T."/>
            <person name="Bruce D."/>
            <person name="Han C."/>
            <person name="Tapia R."/>
            <person name="Saunders E."/>
            <person name="Gilna P."/>
            <person name="Schmutz J."/>
            <person name="Larimer F."/>
            <person name="Land M."/>
            <person name="Hauser L."/>
            <person name="Kyrpides N."/>
            <person name="Kim E."/>
            <person name="Daly M.J."/>
            <person name="Fredrickson J.K."/>
            <person name="Makarova K.S."/>
            <person name="Gaidamakova E.K."/>
            <person name="Zhai M."/>
            <person name="Richardson P."/>
        </authorList>
    </citation>
    <scope>NUCLEOTIDE SEQUENCE [LARGE SCALE GENOMIC DNA]</scope>
    <source>
        <strain>DSM 11300 / CIP 105573 / AG-3a</strain>
    </source>
</reference>
<accession>Q1J0C1</accession>
<proteinExistence type="inferred from homology"/>
<evidence type="ECO:0000255" key="1">
    <source>
        <dbReference type="HAMAP-Rule" id="MF_01080"/>
    </source>
</evidence>
<comment type="function">
    <text evidence="1">Responsible for synthesis of pseudouridine from uracil-55 in the psi GC loop of transfer RNAs.</text>
</comment>
<comment type="catalytic activity">
    <reaction evidence="1">
        <text>uridine(55) in tRNA = pseudouridine(55) in tRNA</text>
        <dbReference type="Rhea" id="RHEA:42532"/>
        <dbReference type="Rhea" id="RHEA-COMP:10101"/>
        <dbReference type="Rhea" id="RHEA-COMP:10102"/>
        <dbReference type="ChEBI" id="CHEBI:65314"/>
        <dbReference type="ChEBI" id="CHEBI:65315"/>
        <dbReference type="EC" id="5.4.99.25"/>
    </reaction>
</comment>
<comment type="similarity">
    <text evidence="1">Belongs to the pseudouridine synthase TruB family. Type 1 subfamily.</text>
</comment>
<sequence length="312" mass="32948">MPVIPVDKPLGLTSHDVVNRARRARGTRRVGHTGTLDPLATGVLVLCVDDSTKLVQFMEADSKEYLAWIALGGTSPTLDAEGPLTEVVPVSPPSEEEARAVLAGFVGPQAQVPPQYSAIQVGGQRAYAVARAGGALDLPARNIVIHALELLGISNRMAESPRTFARSSEGWTPDPTGRTFTLPEPLGEFPTLLVRASVSSGTYLRSLARDVGAALGVPAHLAGLVRTRVGRYDLADSVSVEDLAGAEGFPNLAALDLPRMEADEPLARALRQGKRPRSAVVGRHVVTRDGELVAVVDGDGKELRVVRAWAGA</sequence>
<keyword id="KW-0413">Isomerase</keyword>
<keyword id="KW-0819">tRNA processing</keyword>
<feature type="chain" id="PRO_1000084581" description="tRNA pseudouridine synthase B">
    <location>
        <begin position="1"/>
        <end position="312"/>
    </location>
</feature>
<feature type="active site" description="Nucleophile" evidence="1">
    <location>
        <position position="37"/>
    </location>
</feature>
<protein>
    <recommendedName>
        <fullName evidence="1">tRNA pseudouridine synthase B</fullName>
        <ecNumber evidence="1">5.4.99.25</ecNumber>
    </recommendedName>
    <alternativeName>
        <fullName evidence="1">tRNA pseudouridine(55) synthase</fullName>
        <shortName evidence="1">Psi55 synthase</shortName>
    </alternativeName>
    <alternativeName>
        <fullName evidence="1">tRNA pseudouridylate synthase</fullName>
    </alternativeName>
    <alternativeName>
        <fullName evidence="1">tRNA-uridine isomerase</fullName>
    </alternativeName>
</protein>
<gene>
    <name evidence="1" type="primary">truB</name>
    <name type="ordered locus">Dgeo_0761</name>
</gene>
<dbReference type="EC" id="5.4.99.25" evidence="1"/>
<dbReference type="EMBL" id="CP000359">
    <property type="protein sequence ID" value="ABF45063.1"/>
    <property type="molecule type" value="Genomic_DNA"/>
</dbReference>
<dbReference type="RefSeq" id="WP_011529904.1">
    <property type="nucleotide sequence ID" value="NC_008025.1"/>
</dbReference>
<dbReference type="SMR" id="Q1J0C1"/>
<dbReference type="STRING" id="319795.Dgeo_0761"/>
<dbReference type="KEGG" id="dge:Dgeo_0761"/>
<dbReference type="eggNOG" id="COG0130">
    <property type="taxonomic scope" value="Bacteria"/>
</dbReference>
<dbReference type="HOGENOM" id="CLU_032087_0_2_0"/>
<dbReference type="Proteomes" id="UP000002431">
    <property type="component" value="Chromosome"/>
</dbReference>
<dbReference type="GO" id="GO:0003723">
    <property type="term" value="F:RNA binding"/>
    <property type="evidence" value="ECO:0007669"/>
    <property type="project" value="InterPro"/>
</dbReference>
<dbReference type="GO" id="GO:0160148">
    <property type="term" value="F:tRNA pseudouridine(55) synthase activity"/>
    <property type="evidence" value="ECO:0007669"/>
    <property type="project" value="UniProtKB-EC"/>
</dbReference>
<dbReference type="GO" id="GO:1990481">
    <property type="term" value="P:mRNA pseudouridine synthesis"/>
    <property type="evidence" value="ECO:0007669"/>
    <property type="project" value="TreeGrafter"/>
</dbReference>
<dbReference type="GO" id="GO:0031119">
    <property type="term" value="P:tRNA pseudouridine synthesis"/>
    <property type="evidence" value="ECO:0007669"/>
    <property type="project" value="UniProtKB-UniRule"/>
</dbReference>
<dbReference type="CDD" id="cd02573">
    <property type="entry name" value="PseudoU_synth_EcTruB"/>
    <property type="match status" value="1"/>
</dbReference>
<dbReference type="Gene3D" id="3.30.2350.10">
    <property type="entry name" value="Pseudouridine synthase"/>
    <property type="match status" value="1"/>
</dbReference>
<dbReference type="HAMAP" id="MF_01080">
    <property type="entry name" value="TruB_bact"/>
    <property type="match status" value="1"/>
</dbReference>
<dbReference type="InterPro" id="IPR020103">
    <property type="entry name" value="PsdUridine_synth_cat_dom_sf"/>
</dbReference>
<dbReference type="InterPro" id="IPR002501">
    <property type="entry name" value="PsdUridine_synth_N"/>
</dbReference>
<dbReference type="InterPro" id="IPR014780">
    <property type="entry name" value="tRNA_psdUridine_synth_TruB"/>
</dbReference>
<dbReference type="InterPro" id="IPR032819">
    <property type="entry name" value="TruB_C"/>
</dbReference>
<dbReference type="NCBIfam" id="TIGR00431">
    <property type="entry name" value="TruB"/>
    <property type="match status" value="1"/>
</dbReference>
<dbReference type="PANTHER" id="PTHR13767:SF2">
    <property type="entry name" value="PSEUDOURIDYLATE SYNTHASE TRUB1"/>
    <property type="match status" value="1"/>
</dbReference>
<dbReference type="PANTHER" id="PTHR13767">
    <property type="entry name" value="TRNA-PSEUDOURIDINE SYNTHASE"/>
    <property type="match status" value="1"/>
</dbReference>
<dbReference type="Pfam" id="PF16198">
    <property type="entry name" value="TruB_C_2"/>
    <property type="match status" value="1"/>
</dbReference>
<dbReference type="Pfam" id="PF01509">
    <property type="entry name" value="TruB_N"/>
    <property type="match status" value="1"/>
</dbReference>
<dbReference type="SUPFAM" id="SSF55120">
    <property type="entry name" value="Pseudouridine synthase"/>
    <property type="match status" value="1"/>
</dbReference>
<organism>
    <name type="scientific">Deinococcus geothermalis (strain DSM 11300 / CIP 105573 / AG-3a)</name>
    <dbReference type="NCBI Taxonomy" id="319795"/>
    <lineage>
        <taxon>Bacteria</taxon>
        <taxon>Thermotogati</taxon>
        <taxon>Deinococcota</taxon>
        <taxon>Deinococci</taxon>
        <taxon>Deinococcales</taxon>
        <taxon>Deinococcaceae</taxon>
        <taxon>Deinococcus</taxon>
    </lineage>
</organism>